<gene>
    <name evidence="1" type="primary">tradd</name>
</gene>
<evidence type="ECO:0000250" key="1">
    <source>
        <dbReference type="UniProtKB" id="Q15628"/>
    </source>
</evidence>
<evidence type="ECO:0000250" key="2">
    <source>
        <dbReference type="UniProtKB" id="Q3U0V2"/>
    </source>
</evidence>
<evidence type="ECO:0000255" key="3">
    <source>
        <dbReference type="PROSITE-ProRule" id="PRU00064"/>
    </source>
</evidence>
<evidence type="ECO:0000305" key="4"/>
<evidence type="ECO:0000312" key="5">
    <source>
        <dbReference type="EMBL" id="AAI08638.1"/>
    </source>
</evidence>
<accession>Q32NG6</accession>
<name>TRADD_XENLA</name>
<sequence length="303" mass="34377">MAAGPSMWVGSVYLYIKSDTVPLPGKYTHQKALIYEALRSAISESTRGCRDSIEILKIHSSDQQLILYLKFCGLEPCQRFLKDYKECKVQMQIQNKLKNCFSVEGLPIFTELKIDTGEIDSLLEKEEQCLKYISQMKPTIQKDDELAEIDERLKSIKLDSPSALDSELSLQNSCQCSLPLSLHSNRSYHIEGSTFHFQGEEFVDRPLTSAHIQHFAKSVGKNWKPVGRSLGKTCRALNDTAIENLAYEFDRDGRYEQAYQLLRLFKDSEGKKATVQRLVQALEENGLNSIALDLLSLNENGLK</sequence>
<organism>
    <name type="scientific">Xenopus laevis</name>
    <name type="common">African clawed frog</name>
    <dbReference type="NCBI Taxonomy" id="8355"/>
    <lineage>
        <taxon>Eukaryota</taxon>
        <taxon>Metazoa</taxon>
        <taxon>Chordata</taxon>
        <taxon>Craniata</taxon>
        <taxon>Vertebrata</taxon>
        <taxon>Euteleostomi</taxon>
        <taxon>Amphibia</taxon>
        <taxon>Batrachia</taxon>
        <taxon>Anura</taxon>
        <taxon>Pipoidea</taxon>
        <taxon>Pipidae</taxon>
        <taxon>Xenopodinae</taxon>
        <taxon>Xenopus</taxon>
        <taxon>Xenopus</taxon>
    </lineage>
</organism>
<reference key="1">
    <citation type="submission" date="2005-11" db="EMBL/GenBank/DDBJ databases">
        <authorList>
            <consortium name="NIH - Xenopus Gene Collection (XGC) project"/>
        </authorList>
    </citation>
    <scope>NUCLEOTIDE SEQUENCE [LARGE SCALE MRNA]</scope>
    <source>
        <tissue evidence="5">Testis</tissue>
    </source>
</reference>
<comment type="function">
    <text evidence="1">Adapter molecule for tnfrsf1a that specifically associates with the cytoplasmic domain of activated tnfrsf1a mediating its interaction with fadd.</text>
</comment>
<comment type="subunit">
    <text evidence="1">Heterodimer with tnfrsf1a.</text>
</comment>
<comment type="subcellular location">
    <subcellularLocation>
        <location evidence="2">Nucleus</location>
    </subcellularLocation>
    <subcellularLocation>
        <location evidence="1">Cytoplasm</location>
    </subcellularLocation>
    <subcellularLocation>
        <location evidence="1">Cytoplasm</location>
        <location evidence="1">Cytoskeleton</location>
    </subcellularLocation>
    <text evidence="2">Shuttles between the cytoplasm and the nucleus.</text>
</comment>
<comment type="domain">
    <text evidence="1">Requires the intact death domain to associate with tnfrsf1a.</text>
</comment>
<comment type="sequence caution" evidence="4">
    <conflict type="erroneous initiation">
        <sequence resource="EMBL-CDS" id="AAI08638"/>
    </conflict>
</comment>
<protein>
    <recommendedName>
        <fullName evidence="4">Tumor necrosis factor receptor type 1-associated DEATH domain protein</fullName>
        <shortName evidence="1">TNFR1-associated DEATH domain protein</shortName>
    </recommendedName>
    <alternativeName>
        <fullName evidence="1">TNFRSF1A-associated via death domain</fullName>
    </alternativeName>
</protein>
<proteinExistence type="evidence at transcript level"/>
<dbReference type="EMBL" id="BC108637">
    <property type="protein sequence ID" value="AAI08638.1"/>
    <property type="status" value="ALT_INIT"/>
    <property type="molecule type" value="mRNA"/>
</dbReference>
<dbReference type="RefSeq" id="XP_018113352.1">
    <property type="nucleotide sequence ID" value="XM_018257863.1"/>
</dbReference>
<dbReference type="SMR" id="Q32NG6"/>
<dbReference type="IntAct" id="Q32NG6">
    <property type="interactions" value="1"/>
</dbReference>
<dbReference type="GeneID" id="733418"/>
<dbReference type="KEGG" id="xla:733418"/>
<dbReference type="AGR" id="Xenbase:XB-GENE-989569"/>
<dbReference type="CTD" id="733418"/>
<dbReference type="Xenbase" id="XB-GENE-989569">
    <property type="gene designation" value="tradd.L"/>
</dbReference>
<dbReference type="OMA" id="QPCSRFL"/>
<dbReference type="OrthoDB" id="9903238at2759"/>
<dbReference type="Proteomes" id="UP000186698">
    <property type="component" value="Chromosome 4L"/>
</dbReference>
<dbReference type="Bgee" id="733418">
    <property type="expression patterns" value="Expressed in egg cell and 19 other cell types or tissues"/>
</dbReference>
<dbReference type="GO" id="GO:0005737">
    <property type="term" value="C:cytoplasm"/>
    <property type="evidence" value="ECO:0007669"/>
    <property type="project" value="UniProtKB-SubCell"/>
</dbReference>
<dbReference type="GO" id="GO:0005856">
    <property type="term" value="C:cytoskeleton"/>
    <property type="evidence" value="ECO:0007669"/>
    <property type="project" value="UniProtKB-SubCell"/>
</dbReference>
<dbReference type="GO" id="GO:0005634">
    <property type="term" value="C:nucleus"/>
    <property type="evidence" value="ECO:0007669"/>
    <property type="project" value="UniProtKB-SubCell"/>
</dbReference>
<dbReference type="GO" id="GO:0002947">
    <property type="term" value="C:tumor necrosis factor receptor superfamily complex"/>
    <property type="evidence" value="ECO:0000318"/>
    <property type="project" value="GO_Central"/>
</dbReference>
<dbReference type="GO" id="GO:0005068">
    <property type="term" value="F:transmembrane receptor protein tyrosine kinase adaptor activity"/>
    <property type="evidence" value="ECO:0000318"/>
    <property type="project" value="GO_Central"/>
</dbReference>
<dbReference type="GO" id="GO:0097191">
    <property type="term" value="P:extrinsic apoptotic signaling pathway"/>
    <property type="evidence" value="ECO:0000318"/>
    <property type="project" value="GO_Central"/>
</dbReference>
<dbReference type="GO" id="GO:0043123">
    <property type="term" value="P:positive regulation of canonical NF-kappaB signal transduction"/>
    <property type="evidence" value="ECO:0007669"/>
    <property type="project" value="InterPro"/>
</dbReference>
<dbReference type="CDD" id="cd08780">
    <property type="entry name" value="Death_TRADD"/>
    <property type="match status" value="1"/>
</dbReference>
<dbReference type="Gene3D" id="1.10.533.10">
    <property type="entry name" value="Death Domain, Fas"/>
    <property type="match status" value="1"/>
</dbReference>
<dbReference type="Gene3D" id="3.30.70.680">
    <property type="entry name" value="TRADD, N-terminal domain"/>
    <property type="match status" value="1"/>
</dbReference>
<dbReference type="InterPro" id="IPR011029">
    <property type="entry name" value="DEATH-like_dom_sf"/>
</dbReference>
<dbReference type="InterPro" id="IPR000488">
    <property type="entry name" value="Death_dom"/>
</dbReference>
<dbReference type="InterPro" id="IPR035712">
    <property type="entry name" value="TRADD"/>
</dbReference>
<dbReference type="InterPro" id="IPR009095">
    <property type="entry name" value="TRADD_N"/>
</dbReference>
<dbReference type="InterPro" id="IPR036729">
    <property type="entry name" value="TRADD_N_sf"/>
</dbReference>
<dbReference type="PANTHER" id="PTHR14913">
    <property type="entry name" value="TUMOR NECROSIS FACTOR RECEPTOR TYPE 1-ASSOCIATED DEATH DOMAIN PROTEIN"/>
    <property type="match status" value="1"/>
</dbReference>
<dbReference type="PANTHER" id="PTHR14913:SF0">
    <property type="entry name" value="TUMOR NECROSIS FACTOR RECEPTOR TYPE 1-ASSOCIATED DEATH DOMAIN PROTEIN"/>
    <property type="match status" value="1"/>
</dbReference>
<dbReference type="Pfam" id="PF00531">
    <property type="entry name" value="Death"/>
    <property type="match status" value="1"/>
</dbReference>
<dbReference type="Pfam" id="PF09034">
    <property type="entry name" value="TRADD_N"/>
    <property type="match status" value="1"/>
</dbReference>
<dbReference type="SMART" id="SM00005">
    <property type="entry name" value="DEATH"/>
    <property type="match status" value="1"/>
</dbReference>
<dbReference type="SUPFAM" id="SSF47986">
    <property type="entry name" value="DEATH domain"/>
    <property type="match status" value="1"/>
</dbReference>
<dbReference type="SUPFAM" id="SSF55044">
    <property type="entry name" value="TRADD, N-terminal domain"/>
    <property type="match status" value="1"/>
</dbReference>
<dbReference type="PROSITE" id="PS50017">
    <property type="entry name" value="DEATH_DOMAIN"/>
    <property type="match status" value="1"/>
</dbReference>
<keyword id="KW-0053">Apoptosis</keyword>
<keyword id="KW-0963">Cytoplasm</keyword>
<keyword id="KW-0206">Cytoskeleton</keyword>
<keyword id="KW-0539">Nucleus</keyword>
<keyword id="KW-1185">Reference proteome</keyword>
<feature type="chain" id="PRO_0000291662" description="Tumor necrosis factor receptor type 1-associated DEATH domain protein">
    <location>
        <begin position="1"/>
        <end position="303"/>
    </location>
</feature>
<feature type="domain" description="Death" evidence="3">
    <location>
        <begin position="208"/>
        <end position="298"/>
    </location>
</feature>
<feature type="short sequence motif" description="Nuclear export signal" evidence="2">
    <location>
        <begin position="141"/>
        <end position="157"/>
    </location>
</feature>
<feature type="short sequence motif" description="Nuclear localization signal" evidence="2">
    <location>
        <begin position="224"/>
        <end position="237"/>
    </location>
</feature>